<gene>
    <name type="primary">YSL10</name>
    <name type="ordered locus">Os04g0674600</name>
    <name type="ordered locus">LOC_Os04g57840</name>
    <name type="ORF">OsJ_015875</name>
    <name evidence="4" type="ORF">OsJ_16603</name>
    <name type="ORF">OSJNBa0018M05.14</name>
</gene>
<feature type="chain" id="PRO_0000363873" description="Probable metal-nicotianamine transporter YSL10">
    <location>
        <begin position="1"/>
        <end position="686"/>
    </location>
</feature>
<feature type="transmembrane region" description="Helical" evidence="2">
    <location>
        <begin position="36"/>
        <end position="56"/>
    </location>
</feature>
<feature type="transmembrane region" description="Helical" evidence="2">
    <location>
        <begin position="60"/>
        <end position="80"/>
    </location>
</feature>
<feature type="transmembrane region" description="Helical" evidence="2">
    <location>
        <begin position="109"/>
        <end position="129"/>
    </location>
</feature>
<feature type="transmembrane region" description="Helical" evidence="2">
    <location>
        <begin position="151"/>
        <end position="171"/>
    </location>
</feature>
<feature type="transmembrane region" description="Helical" evidence="2">
    <location>
        <begin position="212"/>
        <end position="232"/>
    </location>
</feature>
<feature type="transmembrane region" description="Helical" evidence="2">
    <location>
        <begin position="271"/>
        <end position="291"/>
    </location>
</feature>
<feature type="transmembrane region" description="Helical" evidence="2">
    <location>
        <begin position="316"/>
        <end position="336"/>
    </location>
</feature>
<feature type="transmembrane region" description="Helical" evidence="2">
    <location>
        <begin position="383"/>
        <end position="403"/>
    </location>
</feature>
<feature type="transmembrane region" description="Helical" evidence="2">
    <location>
        <begin position="415"/>
        <end position="435"/>
    </location>
</feature>
<feature type="transmembrane region" description="Helical" evidence="2">
    <location>
        <begin position="461"/>
        <end position="481"/>
    </location>
</feature>
<feature type="transmembrane region" description="Helical" evidence="2">
    <location>
        <begin position="501"/>
        <end position="521"/>
    </location>
</feature>
<feature type="transmembrane region" description="Helical" evidence="2">
    <location>
        <begin position="556"/>
        <end position="576"/>
    </location>
</feature>
<feature type="transmembrane region" description="Helical" evidence="2">
    <location>
        <begin position="597"/>
        <end position="617"/>
    </location>
</feature>
<feature type="transmembrane region" description="Helical" evidence="2">
    <location>
        <begin position="639"/>
        <end position="659"/>
    </location>
</feature>
<keyword id="KW-0472">Membrane</keyword>
<keyword id="KW-1185">Reference proteome</keyword>
<keyword id="KW-0812">Transmembrane</keyword>
<keyword id="KW-1133">Transmembrane helix</keyword>
<keyword id="KW-0813">Transport</keyword>
<evidence type="ECO:0000250" key="1"/>
<evidence type="ECO:0000255" key="2"/>
<evidence type="ECO:0000305" key="3"/>
<evidence type="ECO:0000312" key="4">
    <source>
        <dbReference type="EMBL" id="EEE61895.1"/>
    </source>
</evidence>
<comment type="function">
    <text evidence="1">May be involved in the transport of nicotianamine-chelated metals.</text>
</comment>
<comment type="subcellular location">
    <subcellularLocation>
        <location evidence="3">Membrane</location>
        <topology evidence="3">Multi-pass membrane protein</topology>
    </subcellularLocation>
</comment>
<comment type="similarity">
    <text evidence="3">Belongs to the YSL (TC 2.A.67.2) family.</text>
</comment>
<comment type="sequence caution" evidence="3">
    <conflict type="erroneous initiation">
        <sequence resource="EMBL-CDS" id="BAF16155"/>
    </conflict>
</comment>
<comment type="sequence caution" evidence="3">
    <conflict type="erroneous gene model prediction">
        <sequence resource="EMBL-CDS" id="CAE03239"/>
    </conflict>
</comment>
<dbReference type="EMBL" id="AB190920">
    <property type="protein sequence ID" value="BAE91890.1"/>
    <property type="molecule type" value="mRNA"/>
</dbReference>
<dbReference type="EMBL" id="AL606457">
    <property type="protein sequence ID" value="CAE03239.2"/>
    <property type="status" value="ALT_SEQ"/>
    <property type="molecule type" value="Genomic_DNA"/>
</dbReference>
<dbReference type="EMBL" id="AP008210">
    <property type="protein sequence ID" value="BAF16155.1"/>
    <property type="status" value="ALT_INIT"/>
    <property type="molecule type" value="Genomic_DNA"/>
</dbReference>
<dbReference type="EMBL" id="AP014960">
    <property type="protein sequence ID" value="BAS91605.1"/>
    <property type="molecule type" value="Genomic_DNA"/>
</dbReference>
<dbReference type="EMBL" id="CM000141">
    <property type="protein sequence ID" value="EEE61895.1"/>
    <property type="molecule type" value="Genomic_DNA"/>
</dbReference>
<dbReference type="EMBL" id="AK069645">
    <property type="protein sequence ID" value="BAG91535.1"/>
    <property type="molecule type" value="mRNA"/>
</dbReference>
<dbReference type="RefSeq" id="XP_015635102.1">
    <property type="nucleotide sequence ID" value="XM_015779616.1"/>
</dbReference>
<dbReference type="SMR" id="Q0J932"/>
<dbReference type="FunCoup" id="Q0J932">
    <property type="interactions" value="50"/>
</dbReference>
<dbReference type="STRING" id="39947.Q0J932"/>
<dbReference type="CAZy" id="CBM49">
    <property type="family name" value="Carbohydrate-Binding Module Family 49"/>
</dbReference>
<dbReference type="CAZy" id="GH9">
    <property type="family name" value="Glycoside Hydrolase Family 9"/>
</dbReference>
<dbReference type="PaxDb" id="39947-Q0J932"/>
<dbReference type="EnsemblPlants" id="Os04t0674600-01">
    <property type="protein sequence ID" value="Os04t0674600-01"/>
    <property type="gene ID" value="Os04g0674600"/>
</dbReference>
<dbReference type="Gramene" id="Os04t0674600-01">
    <property type="protein sequence ID" value="Os04t0674600-01"/>
    <property type="gene ID" value="Os04g0674600"/>
</dbReference>
<dbReference type="KEGG" id="dosa:Os04g0674600"/>
<dbReference type="eggNOG" id="ENOG502QQ2H">
    <property type="taxonomic scope" value="Eukaryota"/>
</dbReference>
<dbReference type="HOGENOM" id="CLU_015477_2_0_1"/>
<dbReference type="InParanoid" id="Q0J932"/>
<dbReference type="OMA" id="IRFVWDR"/>
<dbReference type="OrthoDB" id="627262at2759"/>
<dbReference type="Proteomes" id="UP000000763">
    <property type="component" value="Chromosome 4"/>
</dbReference>
<dbReference type="Proteomes" id="UP000007752">
    <property type="component" value="Chromosome 4"/>
</dbReference>
<dbReference type="Proteomes" id="UP000059680">
    <property type="component" value="Chromosome 4"/>
</dbReference>
<dbReference type="GO" id="GO:0016020">
    <property type="term" value="C:membrane"/>
    <property type="evidence" value="ECO:0000318"/>
    <property type="project" value="GO_Central"/>
</dbReference>
<dbReference type="GO" id="GO:0035673">
    <property type="term" value="F:oligopeptide transmembrane transporter activity"/>
    <property type="evidence" value="ECO:0007669"/>
    <property type="project" value="InterPro"/>
</dbReference>
<dbReference type="InterPro" id="IPR004813">
    <property type="entry name" value="OPT"/>
</dbReference>
<dbReference type="InterPro" id="IPR045035">
    <property type="entry name" value="YSL-like"/>
</dbReference>
<dbReference type="NCBIfam" id="TIGR00728">
    <property type="entry name" value="OPT_sfam"/>
    <property type="match status" value="1"/>
</dbReference>
<dbReference type="PANTHER" id="PTHR31645:SF95">
    <property type="entry name" value="METAL-NICOTIANAMINE TRANSPORTER YSL10-RELATED"/>
    <property type="match status" value="1"/>
</dbReference>
<dbReference type="PANTHER" id="PTHR31645">
    <property type="entry name" value="OLIGOPEPTIDE TRANSPORTER YGL114W-RELATED"/>
    <property type="match status" value="1"/>
</dbReference>
<dbReference type="Pfam" id="PF03169">
    <property type="entry name" value="OPT"/>
    <property type="match status" value="1"/>
</dbReference>
<proteinExistence type="evidence at transcript level"/>
<accession>Q0J932</accession>
<accession>B9FD98</accession>
<accession>Q25CH6</accession>
<accession>Q7XQ94</accession>
<organism>
    <name type="scientific">Oryza sativa subsp. japonica</name>
    <name type="common">Rice</name>
    <dbReference type="NCBI Taxonomy" id="39947"/>
    <lineage>
        <taxon>Eukaryota</taxon>
        <taxon>Viridiplantae</taxon>
        <taxon>Streptophyta</taxon>
        <taxon>Embryophyta</taxon>
        <taxon>Tracheophyta</taxon>
        <taxon>Spermatophyta</taxon>
        <taxon>Magnoliopsida</taxon>
        <taxon>Liliopsida</taxon>
        <taxon>Poales</taxon>
        <taxon>Poaceae</taxon>
        <taxon>BOP clade</taxon>
        <taxon>Oryzoideae</taxon>
        <taxon>Oryzeae</taxon>
        <taxon>Oryzinae</taxon>
        <taxon>Oryza</taxon>
        <taxon>Oryza sativa</taxon>
    </lineage>
</organism>
<sequence>MARSGRERRDQEEEAAVVSVERVFEGRVVPGWKEQVTLRALAVSALLGAMFSVIVMKLNLTTGIIPSLNVSAGLLGFFLLTSWTKLLDKAGVASVRPFTRQENTVVQTCVVACSGIAFSGGFGSYIFAMSDRISDQSGEARDEHNIKNPSLGWMIGFLFIVSFLGLFSVVPLRKIMIIDYKLIYPSGTATAHLINSFHTPQGAKLAKMQVKMLGKFFVMSFSWGFFQWFYTGGDGCGFMSFPTLGLEAYRNKFFFDFSATYVGVGMICPYLVNISVLLGGVMSWGIMWPLIEHKKGDWYPADLKPSSLRGIVGYRVFISISLILGDGLYNFLKVMTRTTTALVMQVRAMMSEPTLPVSGGGGQTPEETFDDKRRTELFLKDQIPNWLALSAYVVIAVVSIATVPRIFHQLRWYHVAVSYVVAPVLAFCNAYGCGLTDWSLATTYGKLAIFTVGAWADASDGGIIAGLAACGVMIGIVSTASDLTQDFKTGYMTLASPRSMFVSQVIGTAMGCVIAPSVFWLFYKAFHDIGMPGSEYPSPNALVYRNMAILGVQGLGSLPKHCLDLCIGFFVAAIAVNLARDLAAPKVARFLPLPMAMAIPFYLGPYFGIDMCIGSLIRFVWDRLDGARAKAFAPPVASGLICGDGIWTLPQSVLALAGVKPPICMKFLSRTTNIKVDAFIAKLPSS</sequence>
<protein>
    <recommendedName>
        <fullName>Probable metal-nicotianamine transporter YSL10</fullName>
    </recommendedName>
    <alternativeName>
        <fullName>Protein YELLOW STRIPE LIKE 10</fullName>
        <shortName>OsYSL10</shortName>
    </alternativeName>
</protein>
<reference key="1">
    <citation type="journal article" date="2004" name="Plant J.">
        <title>OsYSL2 is a rice metal-nicotianamine transporter that is regulated by iron and expressed in the phloem.</title>
        <authorList>
            <person name="Koike S."/>
            <person name="Inoue H."/>
            <person name="Mizuno D."/>
            <person name="Takahashi M."/>
            <person name="Nakanishi H."/>
            <person name="Mori S."/>
            <person name="Nishizawa N.K."/>
        </authorList>
    </citation>
    <scope>NUCLEOTIDE SEQUENCE [MRNA]</scope>
    <scope>GENE FAMILY</scope>
    <scope>NOMENCLATURE</scope>
    <source>
        <strain>cv. Nipponbare</strain>
    </source>
</reference>
<reference key="2">
    <citation type="journal article" date="2002" name="Nature">
        <title>Sequence and analysis of rice chromosome 4.</title>
        <authorList>
            <person name="Feng Q."/>
            <person name="Zhang Y."/>
            <person name="Hao P."/>
            <person name="Wang S."/>
            <person name="Fu G."/>
            <person name="Huang Y."/>
            <person name="Li Y."/>
            <person name="Zhu J."/>
            <person name="Liu Y."/>
            <person name="Hu X."/>
            <person name="Jia P."/>
            <person name="Zhang Y."/>
            <person name="Zhao Q."/>
            <person name="Ying K."/>
            <person name="Yu S."/>
            <person name="Tang Y."/>
            <person name="Weng Q."/>
            <person name="Zhang L."/>
            <person name="Lu Y."/>
            <person name="Mu J."/>
            <person name="Lu Y."/>
            <person name="Zhang L.S."/>
            <person name="Yu Z."/>
            <person name="Fan D."/>
            <person name="Liu X."/>
            <person name="Lu T."/>
            <person name="Li C."/>
            <person name="Wu Y."/>
            <person name="Sun T."/>
            <person name="Lei H."/>
            <person name="Li T."/>
            <person name="Hu H."/>
            <person name="Guan J."/>
            <person name="Wu M."/>
            <person name="Zhang R."/>
            <person name="Zhou B."/>
            <person name="Chen Z."/>
            <person name="Chen L."/>
            <person name="Jin Z."/>
            <person name="Wang R."/>
            <person name="Yin H."/>
            <person name="Cai Z."/>
            <person name="Ren S."/>
            <person name="Lv G."/>
            <person name="Gu W."/>
            <person name="Zhu G."/>
            <person name="Tu Y."/>
            <person name="Jia J."/>
            <person name="Zhang Y."/>
            <person name="Chen J."/>
            <person name="Kang H."/>
            <person name="Chen X."/>
            <person name="Shao C."/>
            <person name="Sun Y."/>
            <person name="Hu Q."/>
            <person name="Zhang X."/>
            <person name="Zhang W."/>
            <person name="Wang L."/>
            <person name="Ding C."/>
            <person name="Sheng H."/>
            <person name="Gu J."/>
            <person name="Chen S."/>
            <person name="Ni L."/>
            <person name="Zhu F."/>
            <person name="Chen W."/>
            <person name="Lan L."/>
            <person name="Lai Y."/>
            <person name="Cheng Z."/>
            <person name="Gu M."/>
            <person name="Jiang J."/>
            <person name="Li J."/>
            <person name="Hong G."/>
            <person name="Xue Y."/>
            <person name="Han B."/>
        </authorList>
    </citation>
    <scope>NUCLEOTIDE SEQUENCE [LARGE SCALE GENOMIC DNA]</scope>
    <source>
        <strain>cv. Nipponbare</strain>
    </source>
</reference>
<reference key="3">
    <citation type="journal article" date="2005" name="Nature">
        <title>The map-based sequence of the rice genome.</title>
        <authorList>
            <consortium name="International rice genome sequencing project (IRGSP)"/>
        </authorList>
    </citation>
    <scope>NUCLEOTIDE SEQUENCE [LARGE SCALE GENOMIC DNA]</scope>
    <source>
        <strain>cv. Nipponbare</strain>
    </source>
</reference>
<reference key="4">
    <citation type="journal article" date="2008" name="Nucleic Acids Res.">
        <title>The rice annotation project database (RAP-DB): 2008 update.</title>
        <authorList>
            <consortium name="The rice annotation project (RAP)"/>
        </authorList>
    </citation>
    <scope>GENOME REANNOTATION</scope>
    <source>
        <strain>cv. Nipponbare</strain>
    </source>
</reference>
<reference key="5">
    <citation type="journal article" date="2013" name="Rice">
        <title>Improvement of the Oryza sativa Nipponbare reference genome using next generation sequence and optical map data.</title>
        <authorList>
            <person name="Kawahara Y."/>
            <person name="de la Bastide M."/>
            <person name="Hamilton J.P."/>
            <person name="Kanamori H."/>
            <person name="McCombie W.R."/>
            <person name="Ouyang S."/>
            <person name="Schwartz D.C."/>
            <person name="Tanaka T."/>
            <person name="Wu J."/>
            <person name="Zhou S."/>
            <person name="Childs K.L."/>
            <person name="Davidson R.M."/>
            <person name="Lin H."/>
            <person name="Quesada-Ocampo L."/>
            <person name="Vaillancourt B."/>
            <person name="Sakai H."/>
            <person name="Lee S.S."/>
            <person name="Kim J."/>
            <person name="Numa H."/>
            <person name="Itoh T."/>
            <person name="Buell C.R."/>
            <person name="Matsumoto T."/>
        </authorList>
    </citation>
    <scope>GENOME REANNOTATION</scope>
    <source>
        <strain>cv. Nipponbare</strain>
    </source>
</reference>
<reference key="6">
    <citation type="journal article" date="2005" name="PLoS Biol.">
        <title>The genomes of Oryza sativa: a history of duplications.</title>
        <authorList>
            <person name="Yu J."/>
            <person name="Wang J."/>
            <person name="Lin W."/>
            <person name="Li S."/>
            <person name="Li H."/>
            <person name="Zhou J."/>
            <person name="Ni P."/>
            <person name="Dong W."/>
            <person name="Hu S."/>
            <person name="Zeng C."/>
            <person name="Zhang J."/>
            <person name="Zhang Y."/>
            <person name="Li R."/>
            <person name="Xu Z."/>
            <person name="Li S."/>
            <person name="Li X."/>
            <person name="Zheng H."/>
            <person name="Cong L."/>
            <person name="Lin L."/>
            <person name="Yin J."/>
            <person name="Geng J."/>
            <person name="Li G."/>
            <person name="Shi J."/>
            <person name="Liu J."/>
            <person name="Lv H."/>
            <person name="Li J."/>
            <person name="Wang J."/>
            <person name="Deng Y."/>
            <person name="Ran L."/>
            <person name="Shi X."/>
            <person name="Wang X."/>
            <person name="Wu Q."/>
            <person name="Li C."/>
            <person name="Ren X."/>
            <person name="Wang J."/>
            <person name="Wang X."/>
            <person name="Li D."/>
            <person name="Liu D."/>
            <person name="Zhang X."/>
            <person name="Ji Z."/>
            <person name="Zhao W."/>
            <person name="Sun Y."/>
            <person name="Zhang Z."/>
            <person name="Bao J."/>
            <person name="Han Y."/>
            <person name="Dong L."/>
            <person name="Ji J."/>
            <person name="Chen P."/>
            <person name="Wu S."/>
            <person name="Liu J."/>
            <person name="Xiao Y."/>
            <person name="Bu D."/>
            <person name="Tan J."/>
            <person name="Yang L."/>
            <person name="Ye C."/>
            <person name="Zhang J."/>
            <person name="Xu J."/>
            <person name="Zhou Y."/>
            <person name="Yu Y."/>
            <person name="Zhang B."/>
            <person name="Zhuang S."/>
            <person name="Wei H."/>
            <person name="Liu B."/>
            <person name="Lei M."/>
            <person name="Yu H."/>
            <person name="Li Y."/>
            <person name="Xu H."/>
            <person name="Wei S."/>
            <person name="He X."/>
            <person name="Fang L."/>
            <person name="Zhang Z."/>
            <person name="Zhang Y."/>
            <person name="Huang X."/>
            <person name="Su Z."/>
            <person name="Tong W."/>
            <person name="Li J."/>
            <person name="Tong Z."/>
            <person name="Li S."/>
            <person name="Ye J."/>
            <person name="Wang L."/>
            <person name="Fang L."/>
            <person name="Lei T."/>
            <person name="Chen C.-S."/>
            <person name="Chen H.-C."/>
            <person name="Xu Z."/>
            <person name="Li H."/>
            <person name="Huang H."/>
            <person name="Zhang F."/>
            <person name="Xu H."/>
            <person name="Li N."/>
            <person name="Zhao C."/>
            <person name="Li S."/>
            <person name="Dong L."/>
            <person name="Huang Y."/>
            <person name="Li L."/>
            <person name="Xi Y."/>
            <person name="Qi Q."/>
            <person name="Li W."/>
            <person name="Zhang B."/>
            <person name="Hu W."/>
            <person name="Zhang Y."/>
            <person name="Tian X."/>
            <person name="Jiao Y."/>
            <person name="Liang X."/>
            <person name="Jin J."/>
            <person name="Gao L."/>
            <person name="Zheng W."/>
            <person name="Hao B."/>
            <person name="Liu S.-M."/>
            <person name="Wang W."/>
            <person name="Yuan L."/>
            <person name="Cao M."/>
            <person name="McDermott J."/>
            <person name="Samudrala R."/>
            <person name="Wang J."/>
            <person name="Wong G.K.-S."/>
            <person name="Yang H."/>
        </authorList>
    </citation>
    <scope>NUCLEOTIDE SEQUENCE [LARGE SCALE GENOMIC DNA]</scope>
    <source>
        <strain>cv. Nipponbare</strain>
    </source>
</reference>
<reference key="7">
    <citation type="journal article" date="2003" name="Science">
        <title>Collection, mapping, and annotation of over 28,000 cDNA clones from japonica rice.</title>
        <authorList>
            <consortium name="The rice full-length cDNA consortium"/>
        </authorList>
    </citation>
    <scope>NUCLEOTIDE SEQUENCE [LARGE SCALE MRNA]</scope>
    <source>
        <strain>cv. Nipponbare</strain>
    </source>
</reference>
<name>YSL10_ORYSJ</name>